<keyword id="KW-0032">Aminotransferase</keyword>
<keyword id="KW-0663">Pyridoxal phosphate</keyword>
<keyword id="KW-0808">Transferase</keyword>
<evidence type="ECO:0000255" key="1">
    <source>
        <dbReference type="HAMAP-Rule" id="MF_01276"/>
    </source>
</evidence>
<evidence type="ECO:0000305" key="2"/>
<comment type="function">
    <text evidence="1">Catalyzes the aminotransferase reaction from putrescine to 2-oxoglutarate, leading to glutamate and 4-aminobutanal, which spontaneously cyclizes to form 1-pyrroline. This is the first step in one of two pathways for putrescine degradation, where putrescine is converted into 4-aminobutanoate (gamma-aminobutyrate or GABA) via 4-aminobutanal. Also functions as a cadaverine transaminase in a a L-lysine degradation pathway to succinate that proceeds via cadaverine, glutarate and L-2-hydroxyglutarate.</text>
</comment>
<comment type="catalytic activity">
    <reaction evidence="1">
        <text>an alkane-alpha,omega-diamine + 2-oxoglutarate = an omega-aminoaldehyde + L-glutamate</text>
        <dbReference type="Rhea" id="RHEA:18217"/>
        <dbReference type="Rhea" id="RHEA-COMP:9766"/>
        <dbReference type="Rhea" id="RHEA-COMP:12750"/>
        <dbReference type="ChEBI" id="CHEBI:16810"/>
        <dbReference type="ChEBI" id="CHEBI:29985"/>
        <dbReference type="ChEBI" id="CHEBI:70977"/>
        <dbReference type="ChEBI" id="CHEBI:133427"/>
        <dbReference type="EC" id="2.6.1.29"/>
    </reaction>
    <physiologicalReaction direction="left-to-right" evidence="1">
        <dbReference type="Rhea" id="RHEA:18218"/>
    </physiologicalReaction>
</comment>
<comment type="catalytic activity">
    <reaction evidence="1">
        <text>putrescine + 2-oxoglutarate = 1-pyrroline + L-glutamate + H2O</text>
        <dbReference type="Rhea" id="RHEA:12268"/>
        <dbReference type="ChEBI" id="CHEBI:15377"/>
        <dbReference type="ChEBI" id="CHEBI:16810"/>
        <dbReference type="ChEBI" id="CHEBI:29985"/>
        <dbReference type="ChEBI" id="CHEBI:36781"/>
        <dbReference type="ChEBI" id="CHEBI:326268"/>
        <dbReference type="EC" id="2.6.1.82"/>
    </reaction>
    <physiologicalReaction direction="left-to-right" evidence="1">
        <dbReference type="Rhea" id="RHEA:12269"/>
    </physiologicalReaction>
</comment>
<comment type="catalytic activity">
    <reaction evidence="1">
        <text>cadaverine + 2-oxoglutarate = 5-aminopentanal + L-glutamate</text>
        <dbReference type="Rhea" id="RHEA:61624"/>
        <dbReference type="ChEBI" id="CHEBI:16810"/>
        <dbReference type="ChEBI" id="CHEBI:29985"/>
        <dbReference type="ChEBI" id="CHEBI:58384"/>
        <dbReference type="ChEBI" id="CHEBI:144896"/>
    </reaction>
    <physiologicalReaction direction="left-to-right" evidence="1">
        <dbReference type="Rhea" id="RHEA:61625"/>
    </physiologicalReaction>
</comment>
<comment type="cofactor">
    <cofactor evidence="1">
        <name>pyridoxal 5'-phosphate</name>
        <dbReference type="ChEBI" id="CHEBI:597326"/>
    </cofactor>
</comment>
<comment type="pathway">
    <text evidence="1">Amine and polyamine degradation; putrescine degradation; 4-aminobutanal from putrescine (transaminase route): step 1/1.</text>
</comment>
<comment type="similarity">
    <text evidence="1">Belongs to the class-III pyridoxal-phosphate-dependent aminotransferase family. Putrescine aminotransferase subfamily.</text>
</comment>
<comment type="sequence caution" evidence="2">
    <conflict type="erroneous initiation">
        <sequence resource="EMBL-CDS" id="CAR09890"/>
    </conflict>
</comment>
<proteinExistence type="inferred from homology"/>
<organism>
    <name type="scientific">Escherichia coli O81 (strain ED1a)</name>
    <dbReference type="NCBI Taxonomy" id="585397"/>
    <lineage>
        <taxon>Bacteria</taxon>
        <taxon>Pseudomonadati</taxon>
        <taxon>Pseudomonadota</taxon>
        <taxon>Gammaproteobacteria</taxon>
        <taxon>Enterobacterales</taxon>
        <taxon>Enterobacteriaceae</taxon>
        <taxon>Escherichia</taxon>
    </lineage>
</organism>
<protein>
    <recommendedName>
        <fullName evidence="1">Putrescine aminotransferase</fullName>
        <shortName evidence="1">PAT</shortName>
        <shortName evidence="1">PATase</shortName>
        <ecNumber evidence="1">2.6.1.82</ecNumber>
    </recommendedName>
    <alternativeName>
        <fullName evidence="1">Cadaverine transaminase</fullName>
    </alternativeName>
    <alternativeName>
        <fullName evidence="1">Diamine transaminase</fullName>
        <ecNumber evidence="1">2.6.1.29</ecNumber>
    </alternativeName>
    <alternativeName>
        <fullName evidence="1">Putrescine transaminase</fullName>
    </alternativeName>
    <alternativeName>
        <fullName evidence="1">Putrescine--2-oxoglutaric acid transaminase</fullName>
    </alternativeName>
</protein>
<sequence length="459" mass="49631">MNRLPSSASALACSAHALNLIEKRTLDHEEMKALNREVIEYFKEHVNPGFLEYRKSVTAGGDYGAVEWQAGGLNTLVDTQGQEFIDCLGGFGIFNVGHRNPVVVSAVQNQLAKQPLHSQELLDPLRAMLAKTLAALTPGKLKYSFFCNSGTESVEAALKLAKAYQSPRGKFTFIATSGAFHGKSLGALSATAKSTFRKPFMPLLPGFRHVPFGNIEAMRTALNECKKTGDDVAAVILEPIQGEGGVILPPPGYLTAVRKLCDEFGALMILDEVQTGMGRTGKMFACEHENVQPDILCLAKALGGGVMPIGATIATEEVFSVLFDNPFLHTTTFGGNPLACAAALATINVLLEQNLPAQAEQKGDMLLDGFRQLAREYPDLVQEARGKGMLMAIEFVDNEIGYNFASEMFRQRVLVAGTLNNAKTIRIEPPLTLTIEQCELVIKAARKALAAMRVSVEEA</sequence>
<reference key="1">
    <citation type="journal article" date="2009" name="PLoS Genet.">
        <title>Organised genome dynamics in the Escherichia coli species results in highly diverse adaptive paths.</title>
        <authorList>
            <person name="Touchon M."/>
            <person name="Hoede C."/>
            <person name="Tenaillon O."/>
            <person name="Barbe V."/>
            <person name="Baeriswyl S."/>
            <person name="Bidet P."/>
            <person name="Bingen E."/>
            <person name="Bonacorsi S."/>
            <person name="Bouchier C."/>
            <person name="Bouvet O."/>
            <person name="Calteau A."/>
            <person name="Chiapello H."/>
            <person name="Clermont O."/>
            <person name="Cruveiller S."/>
            <person name="Danchin A."/>
            <person name="Diard M."/>
            <person name="Dossat C."/>
            <person name="Karoui M.E."/>
            <person name="Frapy E."/>
            <person name="Garry L."/>
            <person name="Ghigo J.M."/>
            <person name="Gilles A.M."/>
            <person name="Johnson J."/>
            <person name="Le Bouguenec C."/>
            <person name="Lescat M."/>
            <person name="Mangenot S."/>
            <person name="Martinez-Jehanne V."/>
            <person name="Matic I."/>
            <person name="Nassif X."/>
            <person name="Oztas S."/>
            <person name="Petit M.A."/>
            <person name="Pichon C."/>
            <person name="Rouy Z."/>
            <person name="Ruf C.S."/>
            <person name="Schneider D."/>
            <person name="Tourret J."/>
            <person name="Vacherie B."/>
            <person name="Vallenet D."/>
            <person name="Medigue C."/>
            <person name="Rocha E.P.C."/>
            <person name="Denamur E."/>
        </authorList>
    </citation>
    <scope>NUCLEOTIDE SEQUENCE [LARGE SCALE GENOMIC DNA]</scope>
    <source>
        <strain>ED1a</strain>
    </source>
</reference>
<gene>
    <name evidence="1" type="primary">patA</name>
    <name type="ordered locus">ECED1_3741</name>
</gene>
<name>PAT_ECO81</name>
<feature type="chain" id="PRO_0000379549" description="Putrescine aminotransferase">
    <location>
        <begin position="1"/>
        <end position="459"/>
    </location>
</feature>
<feature type="binding site" description="in other chain" evidence="1">
    <location>
        <begin position="150"/>
        <end position="151"/>
    </location>
    <ligand>
        <name>pyridoxal 5'-phosphate</name>
        <dbReference type="ChEBI" id="CHEBI:597326"/>
        <note>ligand shared between dimeric partners</note>
    </ligand>
</feature>
<feature type="binding site" description="in other chain" evidence="1">
    <location>
        <position position="274"/>
    </location>
    <ligand>
        <name>pyridoxal 5'-phosphate</name>
        <dbReference type="ChEBI" id="CHEBI:597326"/>
        <note>ligand shared between dimeric partners</note>
    </ligand>
</feature>
<feature type="binding site" evidence="1">
    <location>
        <position position="332"/>
    </location>
    <ligand>
        <name>pyridoxal 5'-phosphate</name>
        <dbReference type="ChEBI" id="CHEBI:597326"/>
        <note>ligand shared between dimeric partners</note>
    </ligand>
</feature>
<feature type="modified residue" description="N6-(pyridoxal phosphate)lysine" evidence="1">
    <location>
        <position position="300"/>
    </location>
</feature>
<accession>B7N0M2</accession>
<dbReference type="EC" id="2.6.1.82" evidence="1"/>
<dbReference type="EC" id="2.6.1.29" evidence="1"/>
<dbReference type="EMBL" id="CU928162">
    <property type="protein sequence ID" value="CAR09890.2"/>
    <property type="status" value="ALT_INIT"/>
    <property type="molecule type" value="Genomic_DNA"/>
</dbReference>
<dbReference type="SMR" id="B7N0M2"/>
<dbReference type="KEGG" id="ecq:ECED1_3741"/>
<dbReference type="HOGENOM" id="CLU_016922_10_0_6"/>
<dbReference type="UniPathway" id="UPA00188">
    <property type="reaction ID" value="UER00290"/>
</dbReference>
<dbReference type="Proteomes" id="UP000000748">
    <property type="component" value="Chromosome"/>
</dbReference>
<dbReference type="GO" id="GO:0019161">
    <property type="term" value="F:diamine transaminase activity"/>
    <property type="evidence" value="ECO:0007669"/>
    <property type="project" value="UniProtKB-EC"/>
</dbReference>
<dbReference type="GO" id="GO:0042802">
    <property type="term" value="F:identical protein binding"/>
    <property type="evidence" value="ECO:0007669"/>
    <property type="project" value="TreeGrafter"/>
</dbReference>
<dbReference type="GO" id="GO:0033094">
    <property type="term" value="F:putrescine--2-oxoglutarate transaminase activity"/>
    <property type="evidence" value="ECO:0007669"/>
    <property type="project" value="UniProtKB-UniRule"/>
</dbReference>
<dbReference type="GO" id="GO:0030170">
    <property type="term" value="F:pyridoxal phosphate binding"/>
    <property type="evidence" value="ECO:0007669"/>
    <property type="project" value="UniProtKB-UniRule"/>
</dbReference>
<dbReference type="GO" id="GO:0019477">
    <property type="term" value="P:L-lysine catabolic process"/>
    <property type="evidence" value="ECO:0007669"/>
    <property type="project" value="UniProtKB-UniRule"/>
</dbReference>
<dbReference type="GO" id="GO:0009447">
    <property type="term" value="P:putrescine catabolic process"/>
    <property type="evidence" value="ECO:0007669"/>
    <property type="project" value="UniProtKB-UniRule"/>
</dbReference>
<dbReference type="CDD" id="cd00610">
    <property type="entry name" value="OAT_like"/>
    <property type="match status" value="1"/>
</dbReference>
<dbReference type="FunFam" id="3.40.640.10:FF:000004">
    <property type="entry name" value="Acetylornithine aminotransferase"/>
    <property type="match status" value="1"/>
</dbReference>
<dbReference type="Gene3D" id="3.90.1150.10">
    <property type="entry name" value="Aspartate Aminotransferase, domain 1"/>
    <property type="match status" value="1"/>
</dbReference>
<dbReference type="Gene3D" id="3.40.640.10">
    <property type="entry name" value="Type I PLP-dependent aspartate aminotransferase-like (Major domain)"/>
    <property type="match status" value="1"/>
</dbReference>
<dbReference type="HAMAP" id="MF_01276">
    <property type="entry name" value="Putres_aminotrans_3"/>
    <property type="match status" value="1"/>
</dbReference>
<dbReference type="InterPro" id="IPR005814">
    <property type="entry name" value="Aminotrans_3"/>
</dbReference>
<dbReference type="InterPro" id="IPR049704">
    <property type="entry name" value="Aminotrans_3_PPA_site"/>
</dbReference>
<dbReference type="InterPro" id="IPR050103">
    <property type="entry name" value="Class-III_PLP-dep_AT"/>
</dbReference>
<dbReference type="InterPro" id="IPR017747">
    <property type="entry name" value="Putrescine_aminotransferase"/>
</dbReference>
<dbReference type="InterPro" id="IPR015424">
    <property type="entry name" value="PyrdxlP-dep_Trfase"/>
</dbReference>
<dbReference type="InterPro" id="IPR015421">
    <property type="entry name" value="PyrdxlP-dep_Trfase_major"/>
</dbReference>
<dbReference type="InterPro" id="IPR015422">
    <property type="entry name" value="PyrdxlP-dep_Trfase_small"/>
</dbReference>
<dbReference type="NCBIfam" id="NF008570">
    <property type="entry name" value="PRK11522.1"/>
    <property type="match status" value="1"/>
</dbReference>
<dbReference type="NCBIfam" id="TIGR03372">
    <property type="entry name" value="putres_am_tran"/>
    <property type="match status" value="1"/>
</dbReference>
<dbReference type="PANTHER" id="PTHR11986">
    <property type="entry name" value="AMINOTRANSFERASE CLASS III"/>
    <property type="match status" value="1"/>
</dbReference>
<dbReference type="PANTHER" id="PTHR11986:SF112">
    <property type="entry name" value="PUTRESCINE AMINOTRANSFERASE"/>
    <property type="match status" value="1"/>
</dbReference>
<dbReference type="Pfam" id="PF00202">
    <property type="entry name" value="Aminotran_3"/>
    <property type="match status" value="1"/>
</dbReference>
<dbReference type="PIRSF" id="PIRSF000521">
    <property type="entry name" value="Transaminase_4ab_Lys_Orn"/>
    <property type="match status" value="1"/>
</dbReference>
<dbReference type="SUPFAM" id="SSF53383">
    <property type="entry name" value="PLP-dependent transferases"/>
    <property type="match status" value="1"/>
</dbReference>
<dbReference type="PROSITE" id="PS00600">
    <property type="entry name" value="AA_TRANSFER_CLASS_3"/>
    <property type="match status" value="1"/>
</dbReference>